<protein>
    <recommendedName>
        <fullName evidence="1">Large ribosomal subunit protein uL3</fullName>
    </recommendedName>
    <alternativeName>
        <fullName evidence="3">50S ribosomal protein L3</fullName>
    </alternativeName>
</protein>
<sequence length="215" mass="23674">MRTGIIAQKIGMTSVFNDKGERISLTLVKVDDCQVVGHKTLEKHGYNALVIGVKDKKISRVTKPMRQVFANAKISPKTKLKEFRISEENFIDIAASLEVDHFTAGQFVDITATTIGKGFAGSMKRHNFRGLEASHGVSISHRSHGSTGQRQDPGKVFKGKKMAGHMGCNQVTIQNLKIFAVDKERKLIMIQGSIPGHKNSYLSVKDAIKKISITV</sequence>
<keyword id="KW-0488">Methylation</keyword>
<keyword id="KW-0687">Ribonucleoprotein</keyword>
<keyword id="KW-0689">Ribosomal protein</keyword>
<keyword id="KW-0694">RNA-binding</keyword>
<keyword id="KW-0699">rRNA-binding</keyword>
<accession>A8GT69</accession>
<proteinExistence type="inferred from homology"/>
<feature type="chain" id="PRO_1000052128" description="Large ribosomal subunit protein uL3">
    <location>
        <begin position="1"/>
        <end position="215"/>
    </location>
</feature>
<feature type="region of interest" description="Disordered" evidence="2">
    <location>
        <begin position="136"/>
        <end position="155"/>
    </location>
</feature>
<feature type="modified residue" description="N5-methylglutamine" evidence="1">
    <location>
        <position position="151"/>
    </location>
</feature>
<reference key="1">
    <citation type="submission" date="2007-09" db="EMBL/GenBank/DDBJ databases">
        <title>Complete genome sequence of Rickettsia rickettsii.</title>
        <authorList>
            <person name="Madan A."/>
            <person name="Fahey J."/>
            <person name="Helton E."/>
            <person name="Ketteman M."/>
            <person name="Madan A."/>
            <person name="Rodrigues S."/>
            <person name="Sanchez A."/>
            <person name="Dasch G."/>
            <person name="Eremeeva M."/>
        </authorList>
    </citation>
    <scope>NUCLEOTIDE SEQUENCE [LARGE SCALE GENOMIC DNA]</scope>
    <source>
        <strain>Sheila Smith</strain>
    </source>
</reference>
<name>RL3_RICRS</name>
<dbReference type="EMBL" id="CP000848">
    <property type="protein sequence ID" value="ABV76594.1"/>
    <property type="molecule type" value="Genomic_DNA"/>
</dbReference>
<dbReference type="RefSeq" id="WP_012151152.1">
    <property type="nucleotide sequence ID" value="NZ_CP121767.1"/>
</dbReference>
<dbReference type="SMR" id="A8GT69"/>
<dbReference type="GeneID" id="79937670"/>
<dbReference type="KEGG" id="rri:A1G_05555"/>
<dbReference type="HOGENOM" id="CLU_044142_2_0_5"/>
<dbReference type="Proteomes" id="UP000006832">
    <property type="component" value="Chromosome"/>
</dbReference>
<dbReference type="GO" id="GO:1990904">
    <property type="term" value="C:ribonucleoprotein complex"/>
    <property type="evidence" value="ECO:0007669"/>
    <property type="project" value="UniProtKB-KW"/>
</dbReference>
<dbReference type="GO" id="GO:0005840">
    <property type="term" value="C:ribosome"/>
    <property type="evidence" value="ECO:0007669"/>
    <property type="project" value="UniProtKB-KW"/>
</dbReference>
<dbReference type="GO" id="GO:0019843">
    <property type="term" value="F:rRNA binding"/>
    <property type="evidence" value="ECO:0007669"/>
    <property type="project" value="UniProtKB-UniRule"/>
</dbReference>
<dbReference type="GO" id="GO:0003735">
    <property type="term" value="F:structural constituent of ribosome"/>
    <property type="evidence" value="ECO:0007669"/>
    <property type="project" value="InterPro"/>
</dbReference>
<dbReference type="GO" id="GO:0006412">
    <property type="term" value="P:translation"/>
    <property type="evidence" value="ECO:0007669"/>
    <property type="project" value="UniProtKB-UniRule"/>
</dbReference>
<dbReference type="FunFam" id="2.40.30.10:FF:000004">
    <property type="entry name" value="50S ribosomal protein L3"/>
    <property type="match status" value="1"/>
</dbReference>
<dbReference type="Gene3D" id="3.30.160.810">
    <property type="match status" value="1"/>
</dbReference>
<dbReference type="Gene3D" id="2.40.30.10">
    <property type="entry name" value="Translation factors"/>
    <property type="match status" value="1"/>
</dbReference>
<dbReference type="HAMAP" id="MF_01325_B">
    <property type="entry name" value="Ribosomal_uL3_B"/>
    <property type="match status" value="1"/>
</dbReference>
<dbReference type="InterPro" id="IPR000597">
    <property type="entry name" value="Ribosomal_uL3"/>
</dbReference>
<dbReference type="InterPro" id="IPR019927">
    <property type="entry name" value="Ribosomal_uL3_bac/org-type"/>
</dbReference>
<dbReference type="InterPro" id="IPR019926">
    <property type="entry name" value="Ribosomal_uL3_CS"/>
</dbReference>
<dbReference type="InterPro" id="IPR009000">
    <property type="entry name" value="Transl_B-barrel_sf"/>
</dbReference>
<dbReference type="NCBIfam" id="TIGR03625">
    <property type="entry name" value="L3_bact"/>
    <property type="match status" value="1"/>
</dbReference>
<dbReference type="PANTHER" id="PTHR11229">
    <property type="entry name" value="50S RIBOSOMAL PROTEIN L3"/>
    <property type="match status" value="1"/>
</dbReference>
<dbReference type="PANTHER" id="PTHR11229:SF16">
    <property type="entry name" value="LARGE RIBOSOMAL SUBUNIT PROTEIN UL3C"/>
    <property type="match status" value="1"/>
</dbReference>
<dbReference type="Pfam" id="PF00297">
    <property type="entry name" value="Ribosomal_L3"/>
    <property type="match status" value="1"/>
</dbReference>
<dbReference type="SUPFAM" id="SSF50447">
    <property type="entry name" value="Translation proteins"/>
    <property type="match status" value="1"/>
</dbReference>
<dbReference type="PROSITE" id="PS00474">
    <property type="entry name" value="RIBOSOMAL_L3"/>
    <property type="match status" value="1"/>
</dbReference>
<organism>
    <name type="scientific">Rickettsia rickettsii (strain Sheila Smith)</name>
    <dbReference type="NCBI Taxonomy" id="392021"/>
    <lineage>
        <taxon>Bacteria</taxon>
        <taxon>Pseudomonadati</taxon>
        <taxon>Pseudomonadota</taxon>
        <taxon>Alphaproteobacteria</taxon>
        <taxon>Rickettsiales</taxon>
        <taxon>Rickettsiaceae</taxon>
        <taxon>Rickettsieae</taxon>
        <taxon>Rickettsia</taxon>
        <taxon>spotted fever group</taxon>
    </lineage>
</organism>
<comment type="function">
    <text evidence="1">One of the primary rRNA binding proteins, it binds directly near the 3'-end of the 23S rRNA, where it nucleates assembly of the 50S subunit.</text>
</comment>
<comment type="subunit">
    <text evidence="1">Part of the 50S ribosomal subunit. Forms a cluster with proteins L14 and L19.</text>
</comment>
<comment type="PTM">
    <text evidence="1">Methylated by PrmB.</text>
</comment>
<comment type="similarity">
    <text evidence="1">Belongs to the universal ribosomal protein uL3 family.</text>
</comment>
<gene>
    <name evidence="1" type="primary">rplC</name>
    <name type="ordered locus">A1G_05555</name>
</gene>
<evidence type="ECO:0000255" key="1">
    <source>
        <dbReference type="HAMAP-Rule" id="MF_01325"/>
    </source>
</evidence>
<evidence type="ECO:0000256" key="2">
    <source>
        <dbReference type="SAM" id="MobiDB-lite"/>
    </source>
</evidence>
<evidence type="ECO:0000305" key="3"/>